<dbReference type="EC" id="6.2.1.5" evidence="1"/>
<dbReference type="EMBL" id="AE002098">
    <property type="protein sequence ID" value="AAF41365.1"/>
    <property type="molecule type" value="Genomic_DNA"/>
</dbReference>
<dbReference type="PIR" id="F81137">
    <property type="entry name" value="F81137"/>
</dbReference>
<dbReference type="RefSeq" id="NP_273997.1">
    <property type="nucleotide sequence ID" value="NC_003112.2"/>
</dbReference>
<dbReference type="SMR" id="Q9JZP4"/>
<dbReference type="FunCoup" id="Q9JZP4">
    <property type="interactions" value="488"/>
</dbReference>
<dbReference type="STRING" id="122586.NMB0959"/>
<dbReference type="PaxDb" id="122586-NMB0959"/>
<dbReference type="KEGG" id="nme:NMB0959"/>
<dbReference type="PATRIC" id="fig|122586.8.peg.1214"/>
<dbReference type="HOGENOM" id="CLU_037430_0_2_4"/>
<dbReference type="InParanoid" id="Q9JZP4"/>
<dbReference type="OrthoDB" id="9802602at2"/>
<dbReference type="UniPathway" id="UPA00223">
    <property type="reaction ID" value="UER00999"/>
</dbReference>
<dbReference type="Proteomes" id="UP000000425">
    <property type="component" value="Chromosome"/>
</dbReference>
<dbReference type="GO" id="GO:0005829">
    <property type="term" value="C:cytosol"/>
    <property type="evidence" value="ECO:0000318"/>
    <property type="project" value="GO_Central"/>
</dbReference>
<dbReference type="GO" id="GO:0042709">
    <property type="term" value="C:succinate-CoA ligase complex"/>
    <property type="evidence" value="ECO:0000318"/>
    <property type="project" value="GO_Central"/>
</dbReference>
<dbReference type="GO" id="GO:0005524">
    <property type="term" value="F:ATP binding"/>
    <property type="evidence" value="ECO:0007669"/>
    <property type="project" value="UniProtKB-UniRule"/>
</dbReference>
<dbReference type="GO" id="GO:0000287">
    <property type="term" value="F:magnesium ion binding"/>
    <property type="evidence" value="ECO:0007669"/>
    <property type="project" value="UniProtKB-UniRule"/>
</dbReference>
<dbReference type="GO" id="GO:0004775">
    <property type="term" value="F:succinate-CoA ligase (ADP-forming) activity"/>
    <property type="evidence" value="ECO:0000318"/>
    <property type="project" value="GO_Central"/>
</dbReference>
<dbReference type="GO" id="GO:0004776">
    <property type="term" value="F:succinate-CoA ligase (GDP-forming) activity"/>
    <property type="evidence" value="ECO:0007669"/>
    <property type="project" value="RHEA"/>
</dbReference>
<dbReference type="GO" id="GO:0006104">
    <property type="term" value="P:succinyl-CoA metabolic process"/>
    <property type="evidence" value="ECO:0000318"/>
    <property type="project" value="GO_Central"/>
</dbReference>
<dbReference type="GO" id="GO:0006099">
    <property type="term" value="P:tricarboxylic acid cycle"/>
    <property type="evidence" value="ECO:0000318"/>
    <property type="project" value="GO_Central"/>
</dbReference>
<dbReference type="FunFam" id="3.30.1490.20:FF:000002">
    <property type="entry name" value="Succinate--CoA ligase [ADP-forming] subunit beta"/>
    <property type="match status" value="1"/>
</dbReference>
<dbReference type="FunFam" id="3.30.470.20:FF:000002">
    <property type="entry name" value="Succinate--CoA ligase [ADP-forming] subunit beta"/>
    <property type="match status" value="1"/>
</dbReference>
<dbReference type="FunFam" id="3.40.50.261:FF:000001">
    <property type="entry name" value="Succinate--CoA ligase [ADP-forming] subunit beta"/>
    <property type="match status" value="1"/>
</dbReference>
<dbReference type="Gene3D" id="3.30.1490.20">
    <property type="entry name" value="ATP-grasp fold, A domain"/>
    <property type="match status" value="1"/>
</dbReference>
<dbReference type="Gene3D" id="3.30.470.20">
    <property type="entry name" value="ATP-grasp fold, B domain"/>
    <property type="match status" value="1"/>
</dbReference>
<dbReference type="Gene3D" id="3.40.50.261">
    <property type="entry name" value="Succinyl-CoA synthetase domains"/>
    <property type="match status" value="1"/>
</dbReference>
<dbReference type="HAMAP" id="MF_00558">
    <property type="entry name" value="Succ_CoA_beta"/>
    <property type="match status" value="1"/>
</dbReference>
<dbReference type="InterPro" id="IPR011761">
    <property type="entry name" value="ATP-grasp"/>
</dbReference>
<dbReference type="InterPro" id="IPR013650">
    <property type="entry name" value="ATP-grasp_succ-CoA_synth-type"/>
</dbReference>
<dbReference type="InterPro" id="IPR013815">
    <property type="entry name" value="ATP_grasp_subdomain_1"/>
</dbReference>
<dbReference type="InterPro" id="IPR017866">
    <property type="entry name" value="Succ-CoA_synthase_bsu_CS"/>
</dbReference>
<dbReference type="InterPro" id="IPR005811">
    <property type="entry name" value="SUCC_ACL_C"/>
</dbReference>
<dbReference type="InterPro" id="IPR005809">
    <property type="entry name" value="Succ_CoA_ligase-like_bsu"/>
</dbReference>
<dbReference type="InterPro" id="IPR016102">
    <property type="entry name" value="Succinyl-CoA_synth-like"/>
</dbReference>
<dbReference type="NCBIfam" id="NF001913">
    <property type="entry name" value="PRK00696.1"/>
    <property type="match status" value="1"/>
</dbReference>
<dbReference type="NCBIfam" id="TIGR01016">
    <property type="entry name" value="sucCoAbeta"/>
    <property type="match status" value="1"/>
</dbReference>
<dbReference type="PANTHER" id="PTHR11815:SF10">
    <property type="entry name" value="SUCCINATE--COA LIGASE [GDP-FORMING] SUBUNIT BETA, MITOCHONDRIAL"/>
    <property type="match status" value="1"/>
</dbReference>
<dbReference type="PANTHER" id="PTHR11815">
    <property type="entry name" value="SUCCINYL-COA SYNTHETASE BETA CHAIN"/>
    <property type="match status" value="1"/>
</dbReference>
<dbReference type="Pfam" id="PF08442">
    <property type="entry name" value="ATP-grasp_2"/>
    <property type="match status" value="1"/>
</dbReference>
<dbReference type="Pfam" id="PF00549">
    <property type="entry name" value="Ligase_CoA"/>
    <property type="match status" value="1"/>
</dbReference>
<dbReference type="PIRSF" id="PIRSF001554">
    <property type="entry name" value="SucCS_beta"/>
    <property type="match status" value="1"/>
</dbReference>
<dbReference type="SUPFAM" id="SSF56059">
    <property type="entry name" value="Glutathione synthetase ATP-binding domain-like"/>
    <property type="match status" value="1"/>
</dbReference>
<dbReference type="SUPFAM" id="SSF52210">
    <property type="entry name" value="Succinyl-CoA synthetase domains"/>
    <property type="match status" value="1"/>
</dbReference>
<dbReference type="PROSITE" id="PS50975">
    <property type="entry name" value="ATP_GRASP"/>
    <property type="match status" value="1"/>
</dbReference>
<dbReference type="PROSITE" id="PS01217">
    <property type="entry name" value="SUCCINYL_COA_LIG_3"/>
    <property type="match status" value="1"/>
</dbReference>
<gene>
    <name evidence="1" type="primary">sucC</name>
    <name type="ordered locus">NMB0959</name>
</gene>
<feature type="chain" id="PRO_0000102842" description="Succinate--CoA ligase [ADP-forming] subunit beta">
    <location>
        <begin position="1"/>
        <end position="388"/>
    </location>
</feature>
<feature type="domain" description="ATP-grasp" evidence="1">
    <location>
        <begin position="9"/>
        <end position="245"/>
    </location>
</feature>
<feature type="binding site" evidence="1">
    <location>
        <position position="46"/>
    </location>
    <ligand>
        <name>ATP</name>
        <dbReference type="ChEBI" id="CHEBI:30616"/>
    </ligand>
</feature>
<feature type="binding site" evidence="1">
    <location>
        <begin position="53"/>
        <end position="55"/>
    </location>
    <ligand>
        <name>ATP</name>
        <dbReference type="ChEBI" id="CHEBI:30616"/>
    </ligand>
</feature>
<feature type="binding site" evidence="1">
    <location>
        <position position="100"/>
    </location>
    <ligand>
        <name>ATP</name>
        <dbReference type="ChEBI" id="CHEBI:30616"/>
    </ligand>
</feature>
<feature type="binding site" evidence="1">
    <location>
        <position position="103"/>
    </location>
    <ligand>
        <name>ATP</name>
        <dbReference type="ChEBI" id="CHEBI:30616"/>
    </ligand>
</feature>
<feature type="binding site" evidence="1">
    <location>
        <position position="108"/>
    </location>
    <ligand>
        <name>ATP</name>
        <dbReference type="ChEBI" id="CHEBI:30616"/>
    </ligand>
</feature>
<feature type="binding site" evidence="1">
    <location>
        <position position="200"/>
    </location>
    <ligand>
        <name>Mg(2+)</name>
        <dbReference type="ChEBI" id="CHEBI:18420"/>
    </ligand>
</feature>
<feature type="binding site" evidence="1">
    <location>
        <position position="214"/>
    </location>
    <ligand>
        <name>Mg(2+)</name>
        <dbReference type="ChEBI" id="CHEBI:18420"/>
    </ligand>
</feature>
<feature type="binding site" evidence="1">
    <location>
        <position position="265"/>
    </location>
    <ligand>
        <name>substrate</name>
        <note>ligand shared with subunit alpha</note>
    </ligand>
</feature>
<feature type="binding site" evidence="1">
    <location>
        <begin position="322"/>
        <end position="324"/>
    </location>
    <ligand>
        <name>substrate</name>
        <note>ligand shared with subunit alpha</note>
    </ligand>
</feature>
<organism>
    <name type="scientific">Neisseria meningitidis serogroup B (strain ATCC BAA-335 / MC58)</name>
    <dbReference type="NCBI Taxonomy" id="122586"/>
    <lineage>
        <taxon>Bacteria</taxon>
        <taxon>Pseudomonadati</taxon>
        <taxon>Pseudomonadota</taxon>
        <taxon>Betaproteobacteria</taxon>
        <taxon>Neisseriales</taxon>
        <taxon>Neisseriaceae</taxon>
        <taxon>Neisseria</taxon>
    </lineage>
</organism>
<protein>
    <recommendedName>
        <fullName evidence="1">Succinate--CoA ligase [ADP-forming] subunit beta</fullName>
        <ecNumber evidence="1">6.2.1.5</ecNumber>
    </recommendedName>
    <alternativeName>
        <fullName evidence="1">Succinyl-CoA synthetase subunit beta</fullName>
        <shortName evidence="1">SCS-beta</shortName>
    </alternativeName>
</protein>
<comment type="function">
    <text evidence="1">Succinyl-CoA synthetase functions in the citric acid cycle (TCA), coupling the hydrolysis of succinyl-CoA to the synthesis of either ATP or GTP and thus represents the only step of substrate-level phosphorylation in the TCA. The beta subunit provides nucleotide specificity of the enzyme and binds the substrate succinate, while the binding sites for coenzyme A and phosphate are found in the alpha subunit.</text>
</comment>
<comment type="catalytic activity">
    <reaction evidence="1">
        <text>succinate + ATP + CoA = succinyl-CoA + ADP + phosphate</text>
        <dbReference type="Rhea" id="RHEA:17661"/>
        <dbReference type="ChEBI" id="CHEBI:30031"/>
        <dbReference type="ChEBI" id="CHEBI:30616"/>
        <dbReference type="ChEBI" id="CHEBI:43474"/>
        <dbReference type="ChEBI" id="CHEBI:57287"/>
        <dbReference type="ChEBI" id="CHEBI:57292"/>
        <dbReference type="ChEBI" id="CHEBI:456216"/>
        <dbReference type="EC" id="6.2.1.5"/>
    </reaction>
    <physiologicalReaction direction="right-to-left" evidence="1">
        <dbReference type="Rhea" id="RHEA:17663"/>
    </physiologicalReaction>
</comment>
<comment type="catalytic activity">
    <reaction evidence="1">
        <text>GTP + succinate + CoA = succinyl-CoA + GDP + phosphate</text>
        <dbReference type="Rhea" id="RHEA:22120"/>
        <dbReference type="ChEBI" id="CHEBI:30031"/>
        <dbReference type="ChEBI" id="CHEBI:37565"/>
        <dbReference type="ChEBI" id="CHEBI:43474"/>
        <dbReference type="ChEBI" id="CHEBI:57287"/>
        <dbReference type="ChEBI" id="CHEBI:57292"/>
        <dbReference type="ChEBI" id="CHEBI:58189"/>
    </reaction>
    <physiologicalReaction direction="right-to-left" evidence="1">
        <dbReference type="Rhea" id="RHEA:22122"/>
    </physiologicalReaction>
</comment>
<comment type="cofactor">
    <cofactor evidence="1">
        <name>Mg(2+)</name>
        <dbReference type="ChEBI" id="CHEBI:18420"/>
    </cofactor>
    <text evidence="1">Binds 1 Mg(2+) ion per subunit.</text>
</comment>
<comment type="pathway">
    <text evidence="1">Carbohydrate metabolism; tricarboxylic acid cycle; succinate from succinyl-CoA (ligase route): step 1/1.</text>
</comment>
<comment type="subunit">
    <text evidence="1">Heterotetramer of two alpha and two beta subunits.</text>
</comment>
<comment type="similarity">
    <text evidence="1">Belongs to the succinate/malate CoA ligase beta subunit family.</text>
</comment>
<sequence length="388" mass="41336">MNLHEYQAKELLASYGLPVQGGILAHNGEEAAAAYDKLGGKFAVVKAQVHAGGRGKAGGVKVVKSREEAKEVAESLIGTNLVTYQTDANGQPVNSVLVCEDMYPVQTELYLGAVVDRSTRRITFMASTEGGVEIEKVAAETPEKIFKVTVDPLVGLQPCQAREVAFQLGLKDKQINEFVKLMTGAYKAFVENDFALFEVNPLAVRENGALACVDGKIGIDSNALYRLPKIAELRDKSQENERELKASEFDLNYVALEGNIGCMVNGAGLAMATMDIIKLKGGQPANFLDVGGGATKDRVVEAFKLILEDKSVQGVLINIFGGIVRCDMIAEAIVAAVKEINVNVPVVVRLEGNNAELGAKILNESGLKLTSADGLNDAAEKIVAAVNA</sequence>
<reference key="1">
    <citation type="journal article" date="2000" name="Science">
        <title>Complete genome sequence of Neisseria meningitidis serogroup B strain MC58.</title>
        <authorList>
            <person name="Tettelin H."/>
            <person name="Saunders N.J."/>
            <person name="Heidelberg J.F."/>
            <person name="Jeffries A.C."/>
            <person name="Nelson K.E."/>
            <person name="Eisen J.A."/>
            <person name="Ketchum K.A."/>
            <person name="Hood D.W."/>
            <person name="Peden J.F."/>
            <person name="Dodson R.J."/>
            <person name="Nelson W.C."/>
            <person name="Gwinn M.L."/>
            <person name="DeBoy R.T."/>
            <person name="Peterson J.D."/>
            <person name="Hickey E.K."/>
            <person name="Haft D.H."/>
            <person name="Salzberg S.L."/>
            <person name="White O."/>
            <person name="Fleischmann R.D."/>
            <person name="Dougherty B.A."/>
            <person name="Mason T.M."/>
            <person name="Ciecko A."/>
            <person name="Parksey D.S."/>
            <person name="Blair E."/>
            <person name="Cittone H."/>
            <person name="Clark E.B."/>
            <person name="Cotton M.D."/>
            <person name="Utterback T.R."/>
            <person name="Khouri H.M."/>
            <person name="Qin H."/>
            <person name="Vamathevan J.J."/>
            <person name="Gill J."/>
            <person name="Scarlato V."/>
            <person name="Masignani V."/>
            <person name="Pizza M."/>
            <person name="Grandi G."/>
            <person name="Sun L."/>
            <person name="Smith H.O."/>
            <person name="Fraser C.M."/>
            <person name="Moxon E.R."/>
            <person name="Rappuoli R."/>
            <person name="Venter J.C."/>
        </authorList>
    </citation>
    <scope>NUCLEOTIDE SEQUENCE [LARGE SCALE GENOMIC DNA]</scope>
    <source>
        <strain>ATCC BAA-335 / MC58</strain>
    </source>
</reference>
<evidence type="ECO:0000255" key="1">
    <source>
        <dbReference type="HAMAP-Rule" id="MF_00558"/>
    </source>
</evidence>
<proteinExistence type="inferred from homology"/>
<name>SUCC_NEIMB</name>
<accession>Q9JZP4</accession>
<keyword id="KW-0067">ATP-binding</keyword>
<keyword id="KW-0436">Ligase</keyword>
<keyword id="KW-0460">Magnesium</keyword>
<keyword id="KW-0479">Metal-binding</keyword>
<keyword id="KW-0547">Nucleotide-binding</keyword>
<keyword id="KW-1185">Reference proteome</keyword>
<keyword id="KW-0816">Tricarboxylic acid cycle</keyword>